<proteinExistence type="inferred from homology"/>
<dbReference type="EMBL" id="AY865171">
    <property type="protein sequence ID" value="AAX58141.1"/>
    <property type="molecule type" value="Genomic_DNA"/>
</dbReference>
<dbReference type="EMBL" id="AP007232">
    <property type="protein sequence ID" value="BAE47580.1"/>
    <property type="molecule type" value="Genomic_DNA"/>
</dbReference>
<dbReference type="EMBL" id="DQ383816">
    <property type="protein sequence ID" value="ABD47219.1"/>
    <property type="molecule type" value="Genomic_DNA"/>
</dbReference>
<dbReference type="RefSeq" id="YP_398315.1">
    <property type="nucleotide sequence ID" value="NC_007578.1"/>
</dbReference>
<dbReference type="SMR" id="Q56P14"/>
<dbReference type="GeneID" id="3772828"/>
<dbReference type="KEGG" id="lsv:3772828"/>
<dbReference type="OrthoDB" id="564131at2759"/>
<dbReference type="GO" id="GO:0009535">
    <property type="term" value="C:chloroplast thylakoid membrane"/>
    <property type="evidence" value="ECO:0007669"/>
    <property type="project" value="UniProtKB-SubCell"/>
</dbReference>
<dbReference type="GO" id="GO:0009523">
    <property type="term" value="C:photosystem II"/>
    <property type="evidence" value="ECO:0007669"/>
    <property type="project" value="UniProtKB-KW"/>
</dbReference>
<dbReference type="GO" id="GO:0019684">
    <property type="term" value="P:photosynthesis, light reaction"/>
    <property type="evidence" value="ECO:0007669"/>
    <property type="project" value="InterPro"/>
</dbReference>
<dbReference type="HAMAP" id="MF_00438">
    <property type="entry name" value="PSII_PsbM"/>
    <property type="match status" value="1"/>
</dbReference>
<dbReference type="InterPro" id="IPR007826">
    <property type="entry name" value="PSII_PsbM"/>
</dbReference>
<dbReference type="InterPro" id="IPR037269">
    <property type="entry name" value="PSII_PsbM_sf"/>
</dbReference>
<dbReference type="NCBIfam" id="TIGR03038">
    <property type="entry name" value="PS_II_psbM"/>
    <property type="match status" value="1"/>
</dbReference>
<dbReference type="PANTHER" id="PTHR35774">
    <property type="entry name" value="PHOTOSYSTEM II REACTION CENTER PROTEIN M"/>
    <property type="match status" value="1"/>
</dbReference>
<dbReference type="PANTHER" id="PTHR35774:SF1">
    <property type="entry name" value="PHOTOSYSTEM II REACTION CENTER PROTEIN M"/>
    <property type="match status" value="1"/>
</dbReference>
<dbReference type="Pfam" id="PF05151">
    <property type="entry name" value="PsbM"/>
    <property type="match status" value="1"/>
</dbReference>
<dbReference type="SUPFAM" id="SSF161033">
    <property type="entry name" value="Photosystem II reaction center protein M, PsbM"/>
    <property type="match status" value="1"/>
</dbReference>
<accession>Q56P14</accession>
<accession>Q1KXN6</accession>
<accession>Q332Z2</accession>
<reference key="1">
    <citation type="journal article" date="2005" name="Mol. Biol. Evol.">
        <title>Two chloroplast DNA inversions originated simultaneously during the early evolution of the sunflower family (Asteraceae).</title>
        <authorList>
            <person name="Kim K.-J."/>
            <person name="Choi K.-S."/>
            <person name="Jansen R.K."/>
        </authorList>
    </citation>
    <scope>NUCLEOTIDE SEQUENCE [GENOMIC DNA]</scope>
</reference>
<reference key="2">
    <citation type="journal article" date="2006" name="Transgenic Res.">
        <title>Efficient and stable transformation of Lactuca sativa L. cv. Cisco (lettuce) plastids.</title>
        <authorList>
            <person name="Kanamoto H."/>
            <person name="Yamashita A."/>
            <person name="Asao H."/>
            <person name="Okumura S."/>
            <person name="Takase H."/>
            <person name="Hattori M."/>
            <person name="Yokota A."/>
            <person name="Tomizawa K."/>
        </authorList>
    </citation>
    <scope>NUCLEOTIDE SEQUENCE [LARGE SCALE GENOMIC DNA]</scope>
    <source>
        <strain>cv. Cisco</strain>
    </source>
</reference>
<reference key="3">
    <citation type="submission" date="2006-01" db="EMBL/GenBank/DDBJ databases">
        <title>A comparison of the first two published chloroplast genomes in Asteraceae: Lactuca and Helianthus.</title>
        <authorList>
            <person name="Timme R.E."/>
            <person name="Kuehl J.V."/>
            <person name="Boore J.L."/>
            <person name="Jansen R.K."/>
        </authorList>
    </citation>
    <scope>NUCLEOTIDE SEQUENCE [LARGE SCALE GENOMIC DNA]</scope>
    <source>
        <strain>cv. Salinas</strain>
    </source>
</reference>
<sequence length="34" mass="3782">MEVNILAFIATALFILVPTAFLLIIYVKTVSQNN</sequence>
<comment type="function">
    <text evidence="1">One of the components of the core complex of photosystem II (PSII). PSII is a light-driven water:plastoquinone oxidoreductase that uses light energy to abstract electrons from H(2)O, generating O(2) and a proton gradient subsequently used for ATP formation. It consists of a core antenna complex that captures photons, and an electron transfer chain that converts photonic excitation into a charge separation. This subunit is found at the monomer-monomer interface.</text>
</comment>
<comment type="subunit">
    <text evidence="1">PSII is composed of 1 copy each of membrane proteins PsbA, PsbB, PsbC, PsbD, PsbE, PsbF, PsbH, PsbI, PsbJ, PsbK, PsbL, PsbM, PsbT, PsbX, PsbY, PsbZ, Psb30/Ycf12, at least 3 peripheral proteins of the oxygen-evolving complex and a large number of cofactors. It forms dimeric complexes.</text>
</comment>
<comment type="subcellular location">
    <subcellularLocation>
        <location evidence="1">Plastid</location>
        <location evidence="1">Chloroplast thylakoid membrane</location>
        <topology evidence="1">Single-pass membrane protein</topology>
    </subcellularLocation>
</comment>
<comment type="similarity">
    <text evidence="1">Belongs to the PsbM family.</text>
</comment>
<protein>
    <recommendedName>
        <fullName evidence="1">Photosystem II reaction center protein M</fullName>
        <shortName evidence="1">PSII-M</shortName>
    </recommendedName>
</protein>
<feature type="chain" id="PRO_0000217557" description="Photosystem II reaction center protein M">
    <location>
        <begin position="1"/>
        <end position="34"/>
    </location>
</feature>
<feature type="transmembrane region" description="Helical" evidence="1">
    <location>
        <begin position="5"/>
        <end position="25"/>
    </location>
</feature>
<evidence type="ECO:0000255" key="1">
    <source>
        <dbReference type="HAMAP-Rule" id="MF_00438"/>
    </source>
</evidence>
<geneLocation type="chloroplast"/>
<keyword id="KW-0150">Chloroplast</keyword>
<keyword id="KW-0472">Membrane</keyword>
<keyword id="KW-0602">Photosynthesis</keyword>
<keyword id="KW-0604">Photosystem II</keyword>
<keyword id="KW-0934">Plastid</keyword>
<keyword id="KW-0674">Reaction center</keyword>
<keyword id="KW-0793">Thylakoid</keyword>
<keyword id="KW-0812">Transmembrane</keyword>
<keyword id="KW-1133">Transmembrane helix</keyword>
<name>PSBM_LACSA</name>
<organism>
    <name type="scientific">Lactuca sativa</name>
    <name type="common">Garden lettuce</name>
    <dbReference type="NCBI Taxonomy" id="4236"/>
    <lineage>
        <taxon>Eukaryota</taxon>
        <taxon>Viridiplantae</taxon>
        <taxon>Streptophyta</taxon>
        <taxon>Embryophyta</taxon>
        <taxon>Tracheophyta</taxon>
        <taxon>Spermatophyta</taxon>
        <taxon>Magnoliopsida</taxon>
        <taxon>eudicotyledons</taxon>
        <taxon>Gunneridae</taxon>
        <taxon>Pentapetalae</taxon>
        <taxon>asterids</taxon>
        <taxon>campanulids</taxon>
        <taxon>Asterales</taxon>
        <taxon>Asteraceae</taxon>
        <taxon>Cichorioideae</taxon>
        <taxon>Cichorieae</taxon>
        <taxon>Lactucinae</taxon>
        <taxon>Lactuca</taxon>
    </lineage>
</organism>
<gene>
    <name evidence="1" type="primary">psbM</name>
    <name type="ORF">LSC008</name>
</gene>